<sequence>MLKHKTFINRISHSIKHYLSFHVSIANLKKISFFISLFSCLTSGSIMLFSLFSSSLHELYGINYLHINFIASLSAIGMYLCLPVLGYLADCYGPSLLSLISIWFFVPSYFVNSQVIKSLEYNNVMKIHLYAFGICFFFIGLATSSLYFSSLLTCAKIYPEHKGLAISLPVTCYGLSTLLGSQLMKLSYFKQYNGFLNLHKVFNFFGVLYLVMGILNFVSSSVVSMESEIIFTNEDEMEEADEESPLMTSRSRHSHHSCEDDDNLIPERSIIEPLKHQERFINFLKDKSAWLLLASLILNIGPMESFQNNLGSIIINSNSESNLSDQVSIMAASSTVTRLAMGGLSDYLSSSKRKFPICRVNLLIINLAIGIVGQFMVTRSTRFSIVSILNGSSYGGLFTIYPTIVASIWGIDMMGSTWGSFMIAPAIGSIGFSIFYGNEVDNKCGVDYSSCLQHYFNLTAVGLSVSLILIIIVWKGIWAKRGYRVF</sequence>
<evidence type="ECO:0000250" key="1"/>
<evidence type="ECO:0000255" key="2"/>
<evidence type="ECO:0000256" key="3">
    <source>
        <dbReference type="SAM" id="MobiDB-lite"/>
    </source>
</evidence>
<evidence type="ECO:0000305" key="4"/>
<accession>Q6BN11</accession>
<gene>
    <name type="primary">MCH1</name>
    <name type="ordered locus">DEHA2F01078g</name>
</gene>
<comment type="function">
    <text evidence="1">Probable transporter.</text>
</comment>
<comment type="subcellular location">
    <subcellularLocation>
        <location evidence="1">Vacuole membrane</location>
        <topology evidence="1">Multi-pass membrane protein</topology>
    </subcellularLocation>
</comment>
<comment type="similarity">
    <text evidence="4">Belongs to the major facilitator superfamily.</text>
</comment>
<organism>
    <name type="scientific">Debaryomyces hansenii (strain ATCC 36239 / CBS 767 / BCRC 21394 / JCM 1990 / NBRC 0083 / IGC 2968)</name>
    <name type="common">Yeast</name>
    <name type="synonym">Torulaspora hansenii</name>
    <dbReference type="NCBI Taxonomy" id="284592"/>
    <lineage>
        <taxon>Eukaryota</taxon>
        <taxon>Fungi</taxon>
        <taxon>Dikarya</taxon>
        <taxon>Ascomycota</taxon>
        <taxon>Saccharomycotina</taxon>
        <taxon>Pichiomycetes</taxon>
        <taxon>Debaryomycetaceae</taxon>
        <taxon>Debaryomyces</taxon>
    </lineage>
</organism>
<dbReference type="EMBL" id="CR382138">
    <property type="protein sequence ID" value="CAG88713.2"/>
    <property type="molecule type" value="Genomic_DNA"/>
</dbReference>
<dbReference type="RefSeq" id="XP_460409.2">
    <property type="nucleotide sequence ID" value="XM_460409.1"/>
</dbReference>
<dbReference type="SMR" id="Q6BN11"/>
<dbReference type="FunCoup" id="Q6BN11">
    <property type="interactions" value="24"/>
</dbReference>
<dbReference type="GlyCosmos" id="Q6BN11">
    <property type="glycosylation" value="3 sites, No reported glycans"/>
</dbReference>
<dbReference type="GeneID" id="2903809"/>
<dbReference type="KEGG" id="dha:DEHA2F01078g"/>
<dbReference type="VEuPathDB" id="FungiDB:DEHA2F01078g"/>
<dbReference type="eggNOG" id="ENOG502QTNE">
    <property type="taxonomic scope" value="Eukaryota"/>
</dbReference>
<dbReference type="HOGENOM" id="CLU_012596_3_0_1"/>
<dbReference type="InParanoid" id="Q6BN11"/>
<dbReference type="OMA" id="PTMWWLA"/>
<dbReference type="OrthoDB" id="199930at2759"/>
<dbReference type="Proteomes" id="UP000000599">
    <property type="component" value="Chromosome F"/>
</dbReference>
<dbReference type="GO" id="GO:0000329">
    <property type="term" value="C:fungal-type vacuole membrane"/>
    <property type="evidence" value="ECO:0007669"/>
    <property type="project" value="EnsemblFungi"/>
</dbReference>
<dbReference type="GO" id="GO:0022857">
    <property type="term" value="F:transmembrane transporter activity"/>
    <property type="evidence" value="ECO:0007669"/>
    <property type="project" value="InterPro"/>
</dbReference>
<dbReference type="CDD" id="cd17354">
    <property type="entry name" value="MFS_Mch1p_like"/>
    <property type="match status" value="1"/>
</dbReference>
<dbReference type="Gene3D" id="1.20.1250.20">
    <property type="entry name" value="MFS general substrate transporter like domains"/>
    <property type="match status" value="1"/>
</dbReference>
<dbReference type="InterPro" id="IPR011701">
    <property type="entry name" value="MFS"/>
</dbReference>
<dbReference type="InterPro" id="IPR036259">
    <property type="entry name" value="MFS_trans_sf"/>
</dbReference>
<dbReference type="PANTHER" id="PTHR21576:SF45">
    <property type="entry name" value="TRANSPORTER MCH1-RELATED"/>
    <property type="match status" value="1"/>
</dbReference>
<dbReference type="PANTHER" id="PTHR21576">
    <property type="entry name" value="UNCHARACTERIZED NODULIN-LIKE PROTEIN"/>
    <property type="match status" value="1"/>
</dbReference>
<dbReference type="Pfam" id="PF07690">
    <property type="entry name" value="MFS_1"/>
    <property type="match status" value="1"/>
</dbReference>
<dbReference type="SUPFAM" id="SSF103473">
    <property type="entry name" value="MFS general substrate transporter"/>
    <property type="match status" value="1"/>
</dbReference>
<name>MCH1_DEBHA</name>
<keyword id="KW-0325">Glycoprotein</keyword>
<keyword id="KW-0472">Membrane</keyword>
<keyword id="KW-1185">Reference proteome</keyword>
<keyword id="KW-0812">Transmembrane</keyword>
<keyword id="KW-1133">Transmembrane helix</keyword>
<keyword id="KW-0813">Transport</keyword>
<keyword id="KW-0926">Vacuole</keyword>
<protein>
    <recommendedName>
        <fullName>Probable transporter MCH1</fullName>
    </recommendedName>
</protein>
<feature type="chain" id="PRO_0000084870" description="Probable transporter MCH1">
    <location>
        <begin position="1"/>
        <end position="486"/>
    </location>
</feature>
<feature type="transmembrane region" description="Helical" evidence="2">
    <location>
        <begin position="31"/>
        <end position="51"/>
    </location>
</feature>
<feature type="transmembrane region" description="Helical" evidence="2">
    <location>
        <begin position="69"/>
        <end position="89"/>
    </location>
</feature>
<feature type="transmembrane region" description="Helical" evidence="2">
    <location>
        <begin position="91"/>
        <end position="111"/>
    </location>
</feature>
<feature type="transmembrane region" description="Helical" evidence="2">
    <location>
        <begin position="132"/>
        <end position="152"/>
    </location>
</feature>
<feature type="transmembrane region" description="Helical" evidence="2">
    <location>
        <begin position="164"/>
        <end position="184"/>
    </location>
</feature>
<feature type="transmembrane region" description="Helical" evidence="2">
    <location>
        <begin position="204"/>
        <end position="224"/>
    </location>
</feature>
<feature type="transmembrane region" description="Helical" evidence="2">
    <location>
        <begin position="280"/>
        <end position="300"/>
    </location>
</feature>
<feature type="transmembrane region" description="Helical" evidence="2">
    <location>
        <begin position="327"/>
        <end position="348"/>
    </location>
</feature>
<feature type="transmembrane region" description="Helical" evidence="2">
    <location>
        <begin position="357"/>
        <end position="377"/>
    </location>
</feature>
<feature type="transmembrane region" description="Helical" evidence="2">
    <location>
        <begin position="395"/>
        <end position="415"/>
    </location>
</feature>
<feature type="transmembrane region" description="Helical" evidence="2">
    <location>
        <begin position="417"/>
        <end position="437"/>
    </location>
</feature>
<feature type="transmembrane region" description="Helical" evidence="2">
    <location>
        <begin position="458"/>
        <end position="478"/>
    </location>
</feature>
<feature type="region of interest" description="Disordered" evidence="3">
    <location>
        <begin position="236"/>
        <end position="260"/>
    </location>
</feature>
<feature type="glycosylation site" description="N-linked (GlcNAc...) asparagine" evidence="2">
    <location>
        <position position="322"/>
    </location>
</feature>
<feature type="glycosylation site" description="N-linked (GlcNAc...) asparagine" evidence="2">
    <location>
        <position position="390"/>
    </location>
</feature>
<feature type="glycosylation site" description="N-linked (GlcNAc...) asparagine" evidence="2">
    <location>
        <position position="457"/>
    </location>
</feature>
<proteinExistence type="inferred from homology"/>
<reference key="1">
    <citation type="journal article" date="2004" name="Nature">
        <title>Genome evolution in yeasts.</title>
        <authorList>
            <person name="Dujon B."/>
            <person name="Sherman D."/>
            <person name="Fischer G."/>
            <person name="Durrens P."/>
            <person name="Casaregola S."/>
            <person name="Lafontaine I."/>
            <person name="de Montigny J."/>
            <person name="Marck C."/>
            <person name="Neuveglise C."/>
            <person name="Talla E."/>
            <person name="Goffard N."/>
            <person name="Frangeul L."/>
            <person name="Aigle M."/>
            <person name="Anthouard V."/>
            <person name="Babour A."/>
            <person name="Barbe V."/>
            <person name="Barnay S."/>
            <person name="Blanchin S."/>
            <person name="Beckerich J.-M."/>
            <person name="Beyne E."/>
            <person name="Bleykasten C."/>
            <person name="Boisrame A."/>
            <person name="Boyer J."/>
            <person name="Cattolico L."/>
            <person name="Confanioleri F."/>
            <person name="de Daruvar A."/>
            <person name="Despons L."/>
            <person name="Fabre E."/>
            <person name="Fairhead C."/>
            <person name="Ferry-Dumazet H."/>
            <person name="Groppi A."/>
            <person name="Hantraye F."/>
            <person name="Hennequin C."/>
            <person name="Jauniaux N."/>
            <person name="Joyet P."/>
            <person name="Kachouri R."/>
            <person name="Kerrest A."/>
            <person name="Koszul R."/>
            <person name="Lemaire M."/>
            <person name="Lesur I."/>
            <person name="Ma L."/>
            <person name="Muller H."/>
            <person name="Nicaud J.-M."/>
            <person name="Nikolski M."/>
            <person name="Oztas S."/>
            <person name="Ozier-Kalogeropoulos O."/>
            <person name="Pellenz S."/>
            <person name="Potier S."/>
            <person name="Richard G.-F."/>
            <person name="Straub M.-L."/>
            <person name="Suleau A."/>
            <person name="Swennen D."/>
            <person name="Tekaia F."/>
            <person name="Wesolowski-Louvel M."/>
            <person name="Westhof E."/>
            <person name="Wirth B."/>
            <person name="Zeniou-Meyer M."/>
            <person name="Zivanovic Y."/>
            <person name="Bolotin-Fukuhara M."/>
            <person name="Thierry A."/>
            <person name="Bouchier C."/>
            <person name="Caudron B."/>
            <person name="Scarpelli C."/>
            <person name="Gaillardin C."/>
            <person name="Weissenbach J."/>
            <person name="Wincker P."/>
            <person name="Souciet J.-L."/>
        </authorList>
    </citation>
    <scope>NUCLEOTIDE SEQUENCE [LARGE SCALE GENOMIC DNA]</scope>
    <source>
        <strain>ATCC 36239 / CBS 767 / BCRC 21394 / JCM 1990 / NBRC 0083 / IGC 2968</strain>
    </source>
</reference>